<dbReference type="EMBL" id="BX640441">
    <property type="protein sequence ID" value="CAE31818.1"/>
    <property type="molecule type" value="Genomic_DNA"/>
</dbReference>
<dbReference type="RefSeq" id="WP_003809308.1">
    <property type="nucleotide sequence ID" value="NC_002927.3"/>
</dbReference>
<dbReference type="SMR" id="Q7WMS0"/>
<dbReference type="GeneID" id="56480006"/>
<dbReference type="KEGG" id="bbr:BB1320"/>
<dbReference type="eggNOG" id="COG1526">
    <property type="taxonomic scope" value="Bacteria"/>
</dbReference>
<dbReference type="HOGENOM" id="CLU_056887_2_0_4"/>
<dbReference type="Proteomes" id="UP000001027">
    <property type="component" value="Chromosome"/>
</dbReference>
<dbReference type="GO" id="GO:0005737">
    <property type="term" value="C:cytoplasm"/>
    <property type="evidence" value="ECO:0007669"/>
    <property type="project" value="UniProtKB-SubCell"/>
</dbReference>
<dbReference type="GO" id="GO:0097163">
    <property type="term" value="F:sulfur carrier activity"/>
    <property type="evidence" value="ECO:0007669"/>
    <property type="project" value="UniProtKB-UniRule"/>
</dbReference>
<dbReference type="GO" id="GO:0016783">
    <property type="term" value="F:sulfurtransferase activity"/>
    <property type="evidence" value="ECO:0007669"/>
    <property type="project" value="InterPro"/>
</dbReference>
<dbReference type="GO" id="GO:0006777">
    <property type="term" value="P:Mo-molybdopterin cofactor biosynthetic process"/>
    <property type="evidence" value="ECO:0007669"/>
    <property type="project" value="UniProtKB-UniRule"/>
</dbReference>
<dbReference type="Gene3D" id="3.10.20.10">
    <property type="match status" value="1"/>
</dbReference>
<dbReference type="Gene3D" id="3.40.140.10">
    <property type="entry name" value="Cytidine Deaminase, domain 2"/>
    <property type="match status" value="1"/>
</dbReference>
<dbReference type="HAMAP" id="MF_00187">
    <property type="entry name" value="FdhD"/>
    <property type="match status" value="1"/>
</dbReference>
<dbReference type="InterPro" id="IPR016193">
    <property type="entry name" value="Cytidine_deaminase-like"/>
</dbReference>
<dbReference type="InterPro" id="IPR003786">
    <property type="entry name" value="FdhD"/>
</dbReference>
<dbReference type="NCBIfam" id="TIGR00129">
    <property type="entry name" value="fdhD_narQ"/>
    <property type="match status" value="1"/>
</dbReference>
<dbReference type="PANTHER" id="PTHR30592">
    <property type="entry name" value="FORMATE DEHYDROGENASE"/>
    <property type="match status" value="1"/>
</dbReference>
<dbReference type="PANTHER" id="PTHR30592:SF1">
    <property type="entry name" value="SULFUR CARRIER PROTEIN FDHD"/>
    <property type="match status" value="1"/>
</dbReference>
<dbReference type="Pfam" id="PF02634">
    <property type="entry name" value="FdhD-NarQ"/>
    <property type="match status" value="1"/>
</dbReference>
<dbReference type="PIRSF" id="PIRSF015626">
    <property type="entry name" value="FdhD"/>
    <property type="match status" value="1"/>
</dbReference>
<dbReference type="SUPFAM" id="SSF53927">
    <property type="entry name" value="Cytidine deaminase-like"/>
    <property type="match status" value="1"/>
</dbReference>
<gene>
    <name evidence="1" type="primary">fdhD</name>
    <name type="ordered locus">BB1320</name>
</gene>
<proteinExistence type="inferred from homology"/>
<protein>
    <recommendedName>
        <fullName evidence="1">Sulfur carrier protein FdhD</fullName>
    </recommendedName>
</protein>
<sequence length="276" mass="29097">MDRLHTSSADWPDHLATQVVRVRGGVLQAAGQSDHVAEETPVALEFNGISHATMLVTPTHLDDFALGFALTEGIVGGMADVRGVELETRCDGIVVQVEIATSCEVRLKERRRAMAGRTGCGLCGVETLPEVVRDVAPVADSDALPVHNVLRAMQSLRSRQTLHDATGATHAAGWADASGEVVLAREDVGRHNALDKLIGALARQGIAPLPGMAVVSSRASFEMVQKTASAGIPILAAVSAPTALAIRLARQTNVTLLGFVRNTDATIYSHPQRIAA</sequence>
<organism>
    <name type="scientific">Bordetella bronchiseptica (strain ATCC BAA-588 / NCTC 13252 / RB50)</name>
    <name type="common">Alcaligenes bronchisepticus</name>
    <dbReference type="NCBI Taxonomy" id="257310"/>
    <lineage>
        <taxon>Bacteria</taxon>
        <taxon>Pseudomonadati</taxon>
        <taxon>Pseudomonadota</taxon>
        <taxon>Betaproteobacteria</taxon>
        <taxon>Burkholderiales</taxon>
        <taxon>Alcaligenaceae</taxon>
        <taxon>Bordetella</taxon>
    </lineage>
</organism>
<reference key="1">
    <citation type="journal article" date="2003" name="Nat. Genet.">
        <title>Comparative analysis of the genome sequences of Bordetella pertussis, Bordetella parapertussis and Bordetella bronchiseptica.</title>
        <authorList>
            <person name="Parkhill J."/>
            <person name="Sebaihia M."/>
            <person name="Preston A."/>
            <person name="Murphy L.D."/>
            <person name="Thomson N.R."/>
            <person name="Harris D.E."/>
            <person name="Holden M.T.G."/>
            <person name="Churcher C.M."/>
            <person name="Bentley S.D."/>
            <person name="Mungall K.L."/>
            <person name="Cerdeno-Tarraga A.-M."/>
            <person name="Temple L."/>
            <person name="James K.D."/>
            <person name="Harris B."/>
            <person name="Quail M.A."/>
            <person name="Achtman M."/>
            <person name="Atkin R."/>
            <person name="Baker S."/>
            <person name="Basham D."/>
            <person name="Bason N."/>
            <person name="Cherevach I."/>
            <person name="Chillingworth T."/>
            <person name="Collins M."/>
            <person name="Cronin A."/>
            <person name="Davis P."/>
            <person name="Doggett J."/>
            <person name="Feltwell T."/>
            <person name="Goble A."/>
            <person name="Hamlin N."/>
            <person name="Hauser H."/>
            <person name="Holroyd S."/>
            <person name="Jagels K."/>
            <person name="Leather S."/>
            <person name="Moule S."/>
            <person name="Norberczak H."/>
            <person name="O'Neil S."/>
            <person name="Ormond D."/>
            <person name="Price C."/>
            <person name="Rabbinowitsch E."/>
            <person name="Rutter S."/>
            <person name="Sanders M."/>
            <person name="Saunders D."/>
            <person name="Seeger K."/>
            <person name="Sharp S."/>
            <person name="Simmonds M."/>
            <person name="Skelton J."/>
            <person name="Squares R."/>
            <person name="Squares S."/>
            <person name="Stevens K."/>
            <person name="Unwin L."/>
            <person name="Whitehead S."/>
            <person name="Barrell B.G."/>
            <person name="Maskell D.J."/>
        </authorList>
    </citation>
    <scope>NUCLEOTIDE SEQUENCE [LARGE SCALE GENOMIC DNA]</scope>
    <source>
        <strain>ATCC BAA-588 / NCTC 13252 / RB50</strain>
    </source>
</reference>
<accession>Q7WMS0</accession>
<keyword id="KW-0963">Cytoplasm</keyword>
<keyword id="KW-0501">Molybdenum cofactor biosynthesis</keyword>
<feature type="chain" id="PRO_0000152891" description="Sulfur carrier protein FdhD">
    <location>
        <begin position="1"/>
        <end position="276"/>
    </location>
</feature>
<feature type="active site" description="Cysteine persulfide intermediate" evidence="1">
    <location>
        <position position="120"/>
    </location>
</feature>
<name>FDHD_BORBR</name>
<comment type="function">
    <text evidence="1">Required for formate dehydrogenase (FDH) activity. Acts as a sulfur carrier protein that transfers sulfur from IscS to the molybdenum cofactor prior to its insertion into FDH.</text>
</comment>
<comment type="subcellular location">
    <subcellularLocation>
        <location evidence="1">Cytoplasm</location>
    </subcellularLocation>
</comment>
<comment type="similarity">
    <text evidence="1">Belongs to the FdhD family.</text>
</comment>
<evidence type="ECO:0000255" key="1">
    <source>
        <dbReference type="HAMAP-Rule" id="MF_00187"/>
    </source>
</evidence>